<comment type="function">
    <text evidence="1">Catalyzes the attachment of isoleucine to tRNA(Ile). As IleRS can inadvertently accommodate and process structurally similar amino acids such as valine, to avoid such errors it has two additional distinct tRNA(Ile)-dependent editing activities. One activity is designated as 'pretransfer' editing and involves the hydrolysis of activated Val-AMP. The other activity is designated 'posttransfer' editing and involves deacylation of mischarged Val-tRNA(Ile).</text>
</comment>
<comment type="catalytic activity">
    <reaction evidence="1">
        <text>tRNA(Ile) + L-isoleucine + ATP = L-isoleucyl-tRNA(Ile) + AMP + diphosphate</text>
        <dbReference type="Rhea" id="RHEA:11060"/>
        <dbReference type="Rhea" id="RHEA-COMP:9666"/>
        <dbReference type="Rhea" id="RHEA-COMP:9695"/>
        <dbReference type="ChEBI" id="CHEBI:30616"/>
        <dbReference type="ChEBI" id="CHEBI:33019"/>
        <dbReference type="ChEBI" id="CHEBI:58045"/>
        <dbReference type="ChEBI" id="CHEBI:78442"/>
        <dbReference type="ChEBI" id="CHEBI:78528"/>
        <dbReference type="ChEBI" id="CHEBI:456215"/>
        <dbReference type="EC" id="6.1.1.5"/>
    </reaction>
</comment>
<comment type="cofactor">
    <cofactor evidence="1">
        <name>Zn(2+)</name>
        <dbReference type="ChEBI" id="CHEBI:29105"/>
    </cofactor>
</comment>
<comment type="subunit">
    <text evidence="1">Monomer.</text>
</comment>
<comment type="subcellular location">
    <subcellularLocation>
        <location evidence="1">Cytoplasm</location>
    </subcellularLocation>
</comment>
<comment type="domain">
    <text evidence="1">IleRS has two distinct active sites: one for aminoacylation and one for editing. The misactivated valine is translocated from the active site to the editing site, which sterically excludes the correctly activated isoleucine. The single editing site contains two valyl binding pockets, one specific for each substrate (Val-AMP or Val-tRNA(Ile)).</text>
</comment>
<comment type="similarity">
    <text evidence="1">Belongs to the class-I aminoacyl-tRNA synthetase family. IleS type 2 subfamily.</text>
</comment>
<evidence type="ECO:0000255" key="1">
    <source>
        <dbReference type="HAMAP-Rule" id="MF_02003"/>
    </source>
</evidence>
<organism>
    <name type="scientific">Methanospirillum hungatei JF-1 (strain ATCC 27890 / DSM 864 / NBRC 100397 / JF-1)</name>
    <dbReference type="NCBI Taxonomy" id="323259"/>
    <lineage>
        <taxon>Archaea</taxon>
        <taxon>Methanobacteriati</taxon>
        <taxon>Methanobacteriota</taxon>
        <taxon>Stenosarchaea group</taxon>
        <taxon>Methanomicrobia</taxon>
        <taxon>Methanomicrobiales</taxon>
        <taxon>Methanospirillaceae</taxon>
        <taxon>Methanospirillum</taxon>
    </lineage>
</organism>
<gene>
    <name evidence="1" type="primary">ileS</name>
    <name type="ordered locus">Mhun_0606</name>
</gene>
<keyword id="KW-0030">Aminoacyl-tRNA synthetase</keyword>
<keyword id="KW-0067">ATP-binding</keyword>
<keyword id="KW-0963">Cytoplasm</keyword>
<keyword id="KW-0436">Ligase</keyword>
<keyword id="KW-0479">Metal-binding</keyword>
<keyword id="KW-0547">Nucleotide-binding</keyword>
<keyword id="KW-0648">Protein biosynthesis</keyword>
<keyword id="KW-1185">Reference proteome</keyword>
<keyword id="KW-0862">Zinc</keyword>
<protein>
    <recommendedName>
        <fullName evidence="1">Isoleucine--tRNA ligase</fullName>
        <ecNumber evidence="1">6.1.1.5</ecNumber>
    </recommendedName>
    <alternativeName>
        <fullName evidence="1">Isoleucyl-tRNA synthetase</fullName>
        <shortName evidence="1">IleRS</shortName>
    </alternativeName>
</protein>
<name>SYI_METHJ</name>
<proteinExistence type="inferred from homology"/>
<sequence>MQEVTSSFTPRVIEASVQKFWTQEDIYARVQEQNRDGKTWFFVDGPPYTTGHIHLGTAWNKILKDSILRYKRMHGLHVIDRAGYDMHGLPIEVRVEHELGFENKKDIEAFGIGAFIERCKQFALSHKDIMSEQFKSLGVWMNFDDPYQTIMPEYIEAAWWTLKQADEKGLLDRGHRVVNWCPRCETAIADSEVEYWDEQDPSIFVKFPIHGLMNEYLVIWTTTPWTLPANVAVAVDKDFIYARVEAIKEGKKEILWIAKDLVEPVLKRGKYQDYSILSEKTGEELAGTTYDSPLADLIPRQKEIVHTVVTAGFVEMDNTGMVHIAPGHGWDDYLLGVEKGLDVFCPVDGAGYYTDEGGIYAGQFVRDANEKILSDLGSHLLGRQKITHRYGHCWRCKTPIIYRATEQWFISVPKMKEKMLSEIKATSWYPDWAGSARFYDFVSDARDWCISRQRYWGIPIPVWQCSSCSAHRVFGTVAELNAAAGSNLTDPHRPYVDEITVPCSCGGTMKRVEDIFDVWFDSAMASWATLGFPRNDALFHEMWPADFITEGQDQTRGWFYSQLGASTIAFNRSPYKSVLMHGFALDADGRKMSKSLGNVVTPEEVVQKFGVDVLRLYILSSNAPWEDLKFNWDGVSTVNRTMNILWNVYRFPLPYMILDGFSPAQTSDGKYDDEYIVRSYREMPEIDRWIISRINTIARSVSADMDEYQLHRVTRLLMNFILEDLSRWYVQIVRPRMWLEEDSPDKKFAYETITYCLRTLCRLLAPFTPHITEAMYENLRLPEDPVSVHMLKWPAGDIRLIDENLERRMDVVRKFDEAVANARQAGKRKLRWPVQNVIVVTSSESVIEAFRSMEDLAKDRANTRNIEVIQGSWERMRFNAEPVMKKIGPSFGKKGPVVKGLIEAADGSALRKQLEESGSVTLSDGSEEFVLTAEHMTFSQHLPEGIFGAEMTDASVYVDTTLTEDLEAEGYSREIIRRLQEMRKQLDLNVEDNIVIDAVIEDVHLRELLSASWLDLIKQEVRGKTLKIHDSVGGRDGSVLFQLDRDWDIEGVNVTLGISLAG</sequence>
<reference key="1">
    <citation type="journal article" date="2016" name="Stand. Genomic Sci.">
        <title>Complete genome sequence of Methanospirillum hungatei type strain JF1.</title>
        <authorList>
            <person name="Gunsalus R.P."/>
            <person name="Cook L.E."/>
            <person name="Crable B."/>
            <person name="Rohlin L."/>
            <person name="McDonald E."/>
            <person name="Mouttaki H."/>
            <person name="Sieber J.R."/>
            <person name="Poweleit N."/>
            <person name="Zhou H."/>
            <person name="Lapidus A.L."/>
            <person name="Daligault H.E."/>
            <person name="Land M."/>
            <person name="Gilna P."/>
            <person name="Ivanova N."/>
            <person name="Kyrpides N."/>
            <person name="Culley D.E."/>
            <person name="McInerney M.J."/>
        </authorList>
    </citation>
    <scope>NUCLEOTIDE SEQUENCE [LARGE SCALE GENOMIC DNA]</scope>
    <source>
        <strain>ATCC 27890 / DSM 864 / NBRC 100397 / JF-1</strain>
    </source>
</reference>
<accession>Q2FPJ4</accession>
<dbReference type="EC" id="6.1.1.5" evidence="1"/>
<dbReference type="EMBL" id="CP000254">
    <property type="protein sequence ID" value="ABD40364.1"/>
    <property type="molecule type" value="Genomic_DNA"/>
</dbReference>
<dbReference type="RefSeq" id="WP_011447649.1">
    <property type="nucleotide sequence ID" value="NC_007796.1"/>
</dbReference>
<dbReference type="SMR" id="Q2FPJ4"/>
<dbReference type="FunCoup" id="Q2FPJ4">
    <property type="interactions" value="209"/>
</dbReference>
<dbReference type="STRING" id="323259.Mhun_0606"/>
<dbReference type="EnsemblBacteria" id="ABD40364">
    <property type="protein sequence ID" value="ABD40364"/>
    <property type="gene ID" value="Mhun_0606"/>
</dbReference>
<dbReference type="GeneID" id="3924432"/>
<dbReference type="KEGG" id="mhu:Mhun_0606"/>
<dbReference type="eggNOG" id="arCOG00807">
    <property type="taxonomic scope" value="Archaea"/>
</dbReference>
<dbReference type="HOGENOM" id="CLU_001493_1_1_2"/>
<dbReference type="InParanoid" id="Q2FPJ4"/>
<dbReference type="OrthoDB" id="30823at2157"/>
<dbReference type="Proteomes" id="UP000001941">
    <property type="component" value="Chromosome"/>
</dbReference>
<dbReference type="GO" id="GO:0005737">
    <property type="term" value="C:cytoplasm"/>
    <property type="evidence" value="ECO:0007669"/>
    <property type="project" value="UniProtKB-SubCell"/>
</dbReference>
<dbReference type="GO" id="GO:0002161">
    <property type="term" value="F:aminoacyl-tRNA deacylase activity"/>
    <property type="evidence" value="ECO:0007669"/>
    <property type="project" value="InterPro"/>
</dbReference>
<dbReference type="GO" id="GO:0005524">
    <property type="term" value="F:ATP binding"/>
    <property type="evidence" value="ECO:0007669"/>
    <property type="project" value="UniProtKB-UniRule"/>
</dbReference>
<dbReference type="GO" id="GO:0004822">
    <property type="term" value="F:isoleucine-tRNA ligase activity"/>
    <property type="evidence" value="ECO:0007669"/>
    <property type="project" value="UniProtKB-UniRule"/>
</dbReference>
<dbReference type="GO" id="GO:0000049">
    <property type="term" value="F:tRNA binding"/>
    <property type="evidence" value="ECO:0007669"/>
    <property type="project" value="InterPro"/>
</dbReference>
<dbReference type="GO" id="GO:0008270">
    <property type="term" value="F:zinc ion binding"/>
    <property type="evidence" value="ECO:0007669"/>
    <property type="project" value="UniProtKB-UniRule"/>
</dbReference>
<dbReference type="GO" id="GO:0006428">
    <property type="term" value="P:isoleucyl-tRNA aminoacylation"/>
    <property type="evidence" value="ECO:0007669"/>
    <property type="project" value="UniProtKB-UniRule"/>
</dbReference>
<dbReference type="CDD" id="cd07961">
    <property type="entry name" value="Anticodon_Ia_Ile_ABEc"/>
    <property type="match status" value="1"/>
</dbReference>
<dbReference type="CDD" id="cd00818">
    <property type="entry name" value="IleRS_core"/>
    <property type="match status" value="1"/>
</dbReference>
<dbReference type="FunFam" id="3.40.50.620:FF:000286">
    <property type="entry name" value="Isoleucine--tRNA ligase"/>
    <property type="match status" value="1"/>
</dbReference>
<dbReference type="Gene3D" id="3.40.50.620">
    <property type="entry name" value="HUPs"/>
    <property type="match status" value="2"/>
</dbReference>
<dbReference type="Gene3D" id="1.10.730.10">
    <property type="entry name" value="Isoleucyl-tRNA Synthetase, Domain 1"/>
    <property type="match status" value="1"/>
</dbReference>
<dbReference type="Gene3D" id="3.90.740.10">
    <property type="entry name" value="Valyl/Leucyl/Isoleucyl-tRNA synthetase, editing domain"/>
    <property type="match status" value="1"/>
</dbReference>
<dbReference type="HAMAP" id="MF_02003">
    <property type="entry name" value="Ile_tRNA_synth_type2"/>
    <property type="match status" value="1"/>
</dbReference>
<dbReference type="InterPro" id="IPR001412">
    <property type="entry name" value="aa-tRNA-synth_I_CS"/>
</dbReference>
<dbReference type="InterPro" id="IPR002300">
    <property type="entry name" value="aa-tRNA-synth_Ia"/>
</dbReference>
<dbReference type="InterPro" id="IPR033709">
    <property type="entry name" value="Anticodon_Ile_ABEc"/>
</dbReference>
<dbReference type="InterPro" id="IPR002301">
    <property type="entry name" value="Ile-tRNA-ligase"/>
</dbReference>
<dbReference type="InterPro" id="IPR023586">
    <property type="entry name" value="Ile-tRNA-ligase_type2"/>
</dbReference>
<dbReference type="InterPro" id="IPR013155">
    <property type="entry name" value="M/V/L/I-tRNA-synth_anticd-bd"/>
</dbReference>
<dbReference type="InterPro" id="IPR014729">
    <property type="entry name" value="Rossmann-like_a/b/a_fold"/>
</dbReference>
<dbReference type="InterPro" id="IPR009080">
    <property type="entry name" value="tRNAsynth_Ia_anticodon-bd"/>
</dbReference>
<dbReference type="InterPro" id="IPR009008">
    <property type="entry name" value="Val/Leu/Ile-tRNA-synth_edit"/>
</dbReference>
<dbReference type="NCBIfam" id="TIGR00392">
    <property type="entry name" value="ileS"/>
    <property type="match status" value="1"/>
</dbReference>
<dbReference type="PANTHER" id="PTHR42780:SF1">
    <property type="entry name" value="ISOLEUCINE--TRNA LIGASE, CYTOPLASMIC"/>
    <property type="match status" value="1"/>
</dbReference>
<dbReference type="PANTHER" id="PTHR42780">
    <property type="entry name" value="SOLEUCYL-TRNA SYNTHETASE"/>
    <property type="match status" value="1"/>
</dbReference>
<dbReference type="Pfam" id="PF08264">
    <property type="entry name" value="Anticodon_1"/>
    <property type="match status" value="1"/>
</dbReference>
<dbReference type="Pfam" id="PF19302">
    <property type="entry name" value="DUF5915"/>
    <property type="match status" value="1"/>
</dbReference>
<dbReference type="Pfam" id="PF00133">
    <property type="entry name" value="tRNA-synt_1"/>
    <property type="match status" value="1"/>
</dbReference>
<dbReference type="PRINTS" id="PR00984">
    <property type="entry name" value="TRNASYNTHILE"/>
</dbReference>
<dbReference type="SUPFAM" id="SSF47323">
    <property type="entry name" value="Anticodon-binding domain of a subclass of class I aminoacyl-tRNA synthetases"/>
    <property type="match status" value="1"/>
</dbReference>
<dbReference type="SUPFAM" id="SSF52374">
    <property type="entry name" value="Nucleotidylyl transferase"/>
    <property type="match status" value="1"/>
</dbReference>
<dbReference type="SUPFAM" id="SSF50677">
    <property type="entry name" value="ValRS/IleRS/LeuRS editing domain"/>
    <property type="match status" value="1"/>
</dbReference>
<dbReference type="PROSITE" id="PS00178">
    <property type="entry name" value="AA_TRNA_LIGASE_I"/>
    <property type="match status" value="1"/>
</dbReference>
<feature type="chain" id="PRO_1000022154" description="Isoleucine--tRNA ligase">
    <location>
        <begin position="1"/>
        <end position="1062"/>
    </location>
</feature>
<feature type="short sequence motif" description="'HIGH' region">
    <location>
        <begin position="47"/>
        <end position="57"/>
    </location>
</feature>
<feature type="short sequence motif" description="'KMSKS' region">
    <location>
        <begin position="591"/>
        <end position="595"/>
    </location>
</feature>
<feature type="binding site" evidence="1">
    <location>
        <position position="594"/>
    </location>
    <ligand>
        <name>ATP</name>
        <dbReference type="ChEBI" id="CHEBI:30616"/>
    </ligand>
</feature>